<keyword id="KW-0004">4Fe-4S</keyword>
<keyword id="KW-0408">Iron</keyword>
<keyword id="KW-0411">Iron-sulfur</keyword>
<keyword id="KW-0456">Lyase</keyword>
<keyword id="KW-0479">Metal-binding</keyword>
<keyword id="KW-0949">S-adenosyl-L-methionine</keyword>
<keyword id="KW-0784">Thiamine biosynthesis</keyword>
<keyword id="KW-0862">Zinc</keyword>
<dbReference type="EC" id="4.1.99.17" evidence="1"/>
<dbReference type="EMBL" id="AM933173">
    <property type="protein sequence ID" value="CAR39233.1"/>
    <property type="molecule type" value="Genomic_DNA"/>
</dbReference>
<dbReference type="RefSeq" id="WP_000108430.1">
    <property type="nucleotide sequence ID" value="NC_011274.1"/>
</dbReference>
<dbReference type="SMR" id="B5RFJ0"/>
<dbReference type="KEGG" id="seg:SG3442"/>
<dbReference type="HOGENOM" id="CLU_013181_2_1_6"/>
<dbReference type="UniPathway" id="UPA00060"/>
<dbReference type="Proteomes" id="UP000008321">
    <property type="component" value="Chromosome"/>
</dbReference>
<dbReference type="GO" id="GO:0005829">
    <property type="term" value="C:cytosol"/>
    <property type="evidence" value="ECO:0007669"/>
    <property type="project" value="TreeGrafter"/>
</dbReference>
<dbReference type="GO" id="GO:0051539">
    <property type="term" value="F:4 iron, 4 sulfur cluster binding"/>
    <property type="evidence" value="ECO:0007669"/>
    <property type="project" value="UniProtKB-KW"/>
</dbReference>
<dbReference type="GO" id="GO:0016830">
    <property type="term" value="F:carbon-carbon lyase activity"/>
    <property type="evidence" value="ECO:0007669"/>
    <property type="project" value="InterPro"/>
</dbReference>
<dbReference type="GO" id="GO:0008270">
    <property type="term" value="F:zinc ion binding"/>
    <property type="evidence" value="ECO:0007669"/>
    <property type="project" value="UniProtKB-UniRule"/>
</dbReference>
<dbReference type="GO" id="GO:0009228">
    <property type="term" value="P:thiamine biosynthetic process"/>
    <property type="evidence" value="ECO:0007669"/>
    <property type="project" value="UniProtKB-KW"/>
</dbReference>
<dbReference type="GO" id="GO:0009229">
    <property type="term" value="P:thiamine diphosphate biosynthetic process"/>
    <property type="evidence" value="ECO:0007669"/>
    <property type="project" value="UniProtKB-UniRule"/>
</dbReference>
<dbReference type="FunFam" id="3.20.20.540:FF:000001">
    <property type="entry name" value="Phosphomethylpyrimidine synthase"/>
    <property type="match status" value="1"/>
</dbReference>
<dbReference type="Gene3D" id="6.10.250.620">
    <property type="match status" value="1"/>
</dbReference>
<dbReference type="Gene3D" id="3.20.20.540">
    <property type="entry name" value="Radical SAM ThiC family, central domain"/>
    <property type="match status" value="1"/>
</dbReference>
<dbReference type="HAMAP" id="MF_00089">
    <property type="entry name" value="ThiC"/>
    <property type="match status" value="1"/>
</dbReference>
<dbReference type="InterPro" id="IPR037509">
    <property type="entry name" value="ThiC"/>
</dbReference>
<dbReference type="InterPro" id="IPR025747">
    <property type="entry name" value="ThiC-associated_dom"/>
</dbReference>
<dbReference type="InterPro" id="IPR038521">
    <property type="entry name" value="ThiC/Bza_core_dom"/>
</dbReference>
<dbReference type="InterPro" id="IPR002817">
    <property type="entry name" value="ThiC/BzaA/B"/>
</dbReference>
<dbReference type="NCBIfam" id="NF006763">
    <property type="entry name" value="PRK09284.1"/>
    <property type="match status" value="1"/>
</dbReference>
<dbReference type="NCBIfam" id="NF009895">
    <property type="entry name" value="PRK13352.1"/>
    <property type="match status" value="1"/>
</dbReference>
<dbReference type="NCBIfam" id="TIGR00190">
    <property type="entry name" value="thiC"/>
    <property type="match status" value="1"/>
</dbReference>
<dbReference type="PANTHER" id="PTHR30557:SF1">
    <property type="entry name" value="PHOSPHOMETHYLPYRIMIDINE SYNTHASE, CHLOROPLASTIC"/>
    <property type="match status" value="1"/>
</dbReference>
<dbReference type="PANTHER" id="PTHR30557">
    <property type="entry name" value="THIAMINE BIOSYNTHESIS PROTEIN THIC"/>
    <property type="match status" value="1"/>
</dbReference>
<dbReference type="Pfam" id="PF13667">
    <property type="entry name" value="ThiC-associated"/>
    <property type="match status" value="1"/>
</dbReference>
<dbReference type="Pfam" id="PF01964">
    <property type="entry name" value="ThiC_Rad_SAM"/>
    <property type="match status" value="1"/>
</dbReference>
<dbReference type="SFLD" id="SFLDF00407">
    <property type="entry name" value="phosphomethylpyrimidine_syntha"/>
    <property type="match status" value="1"/>
</dbReference>
<dbReference type="SFLD" id="SFLDG01114">
    <property type="entry name" value="phosphomethylpyrimidine_syntha"/>
    <property type="match status" value="1"/>
</dbReference>
<dbReference type="SFLD" id="SFLDS00113">
    <property type="entry name" value="Radical_SAM_Phosphomethylpyrim"/>
    <property type="match status" value="1"/>
</dbReference>
<name>THIC_SALG2</name>
<feature type="chain" id="PRO_1000093230" description="Phosphomethylpyrimidine synthase">
    <location>
        <begin position="1"/>
        <end position="631"/>
    </location>
</feature>
<feature type="binding site" evidence="1">
    <location>
        <position position="239"/>
    </location>
    <ligand>
        <name>substrate</name>
    </ligand>
</feature>
<feature type="binding site" evidence="1">
    <location>
        <position position="268"/>
    </location>
    <ligand>
        <name>substrate</name>
    </ligand>
</feature>
<feature type="binding site" evidence="1">
    <location>
        <position position="297"/>
    </location>
    <ligand>
        <name>substrate</name>
    </ligand>
</feature>
<feature type="binding site" evidence="1">
    <location>
        <position position="333"/>
    </location>
    <ligand>
        <name>substrate</name>
    </ligand>
</feature>
<feature type="binding site" evidence="1">
    <location>
        <begin position="353"/>
        <end position="355"/>
    </location>
    <ligand>
        <name>substrate</name>
    </ligand>
</feature>
<feature type="binding site" evidence="1">
    <location>
        <begin position="394"/>
        <end position="397"/>
    </location>
    <ligand>
        <name>substrate</name>
    </ligand>
</feature>
<feature type="binding site" evidence="1">
    <location>
        <position position="433"/>
    </location>
    <ligand>
        <name>substrate</name>
    </ligand>
</feature>
<feature type="binding site" evidence="1">
    <location>
        <position position="437"/>
    </location>
    <ligand>
        <name>Zn(2+)</name>
        <dbReference type="ChEBI" id="CHEBI:29105"/>
    </ligand>
</feature>
<feature type="binding site" evidence="1">
    <location>
        <position position="460"/>
    </location>
    <ligand>
        <name>substrate</name>
    </ligand>
</feature>
<feature type="binding site" evidence="1">
    <location>
        <position position="501"/>
    </location>
    <ligand>
        <name>Zn(2+)</name>
        <dbReference type="ChEBI" id="CHEBI:29105"/>
    </ligand>
</feature>
<feature type="binding site" evidence="1">
    <location>
        <position position="581"/>
    </location>
    <ligand>
        <name>[4Fe-4S] cluster</name>
        <dbReference type="ChEBI" id="CHEBI:49883"/>
        <note>4Fe-4S-S-AdoMet</note>
    </ligand>
</feature>
<feature type="binding site" evidence="1">
    <location>
        <position position="584"/>
    </location>
    <ligand>
        <name>[4Fe-4S] cluster</name>
        <dbReference type="ChEBI" id="CHEBI:49883"/>
        <note>4Fe-4S-S-AdoMet</note>
    </ligand>
</feature>
<feature type="binding site" evidence="1">
    <location>
        <position position="589"/>
    </location>
    <ligand>
        <name>[4Fe-4S] cluster</name>
        <dbReference type="ChEBI" id="CHEBI:49883"/>
        <note>4Fe-4S-S-AdoMet</note>
    </ligand>
</feature>
<gene>
    <name evidence="1" type="primary">thiC</name>
    <name type="ordered locus">SG3442</name>
</gene>
<evidence type="ECO:0000255" key="1">
    <source>
        <dbReference type="HAMAP-Rule" id="MF_00089"/>
    </source>
</evidence>
<comment type="function">
    <text evidence="1">Catalyzes the synthesis of the hydroxymethylpyrimidine phosphate (HMP-P) moiety of thiamine from aminoimidazole ribotide (AIR) in a radical S-adenosyl-L-methionine (SAM)-dependent reaction.</text>
</comment>
<comment type="catalytic activity">
    <reaction evidence="1">
        <text>5-amino-1-(5-phospho-beta-D-ribosyl)imidazole + S-adenosyl-L-methionine = 4-amino-2-methyl-5-(phosphooxymethyl)pyrimidine + CO + 5'-deoxyadenosine + formate + L-methionine + 3 H(+)</text>
        <dbReference type="Rhea" id="RHEA:24840"/>
        <dbReference type="ChEBI" id="CHEBI:15378"/>
        <dbReference type="ChEBI" id="CHEBI:15740"/>
        <dbReference type="ChEBI" id="CHEBI:17245"/>
        <dbReference type="ChEBI" id="CHEBI:17319"/>
        <dbReference type="ChEBI" id="CHEBI:57844"/>
        <dbReference type="ChEBI" id="CHEBI:58354"/>
        <dbReference type="ChEBI" id="CHEBI:59789"/>
        <dbReference type="ChEBI" id="CHEBI:137981"/>
        <dbReference type="EC" id="4.1.99.17"/>
    </reaction>
</comment>
<comment type="cofactor">
    <cofactor evidence="1">
        <name>[4Fe-4S] cluster</name>
        <dbReference type="ChEBI" id="CHEBI:49883"/>
    </cofactor>
    <text evidence="1">Binds 1 [4Fe-4S] cluster per subunit. The cluster is coordinated with 3 cysteines and an exchangeable S-adenosyl-L-methionine.</text>
</comment>
<comment type="pathway">
    <text evidence="1">Cofactor biosynthesis; thiamine diphosphate biosynthesis.</text>
</comment>
<comment type="subunit">
    <text evidence="1">Homodimer.</text>
</comment>
<comment type="similarity">
    <text evidence="1">Belongs to the ThiC family.</text>
</comment>
<reference key="1">
    <citation type="journal article" date="2008" name="Genome Res.">
        <title>Comparative genome analysis of Salmonella enteritidis PT4 and Salmonella gallinarum 287/91 provides insights into evolutionary and host adaptation pathways.</title>
        <authorList>
            <person name="Thomson N.R."/>
            <person name="Clayton D.J."/>
            <person name="Windhorst D."/>
            <person name="Vernikos G."/>
            <person name="Davidson S."/>
            <person name="Churcher C."/>
            <person name="Quail M.A."/>
            <person name="Stevens M."/>
            <person name="Jones M.A."/>
            <person name="Watson M."/>
            <person name="Barron A."/>
            <person name="Layton A."/>
            <person name="Pickard D."/>
            <person name="Kingsley R.A."/>
            <person name="Bignell A."/>
            <person name="Clark L."/>
            <person name="Harris B."/>
            <person name="Ormond D."/>
            <person name="Abdellah Z."/>
            <person name="Brooks K."/>
            <person name="Cherevach I."/>
            <person name="Chillingworth T."/>
            <person name="Woodward J."/>
            <person name="Norberczak H."/>
            <person name="Lord A."/>
            <person name="Arrowsmith C."/>
            <person name="Jagels K."/>
            <person name="Moule S."/>
            <person name="Mungall K."/>
            <person name="Saunders M."/>
            <person name="Whitehead S."/>
            <person name="Chabalgoity J.A."/>
            <person name="Maskell D."/>
            <person name="Humphreys T."/>
            <person name="Roberts M."/>
            <person name="Barrow P.A."/>
            <person name="Dougan G."/>
            <person name="Parkhill J."/>
        </authorList>
    </citation>
    <scope>NUCLEOTIDE SEQUENCE [LARGE SCALE GENOMIC DNA]</scope>
    <source>
        <strain>287/91 / NCTC 13346</strain>
    </source>
</reference>
<organism>
    <name type="scientific">Salmonella gallinarum (strain 287/91 / NCTC 13346)</name>
    <dbReference type="NCBI Taxonomy" id="550538"/>
    <lineage>
        <taxon>Bacteria</taxon>
        <taxon>Pseudomonadati</taxon>
        <taxon>Pseudomonadota</taxon>
        <taxon>Gammaproteobacteria</taxon>
        <taxon>Enterobacterales</taxon>
        <taxon>Enterobacteriaceae</taxon>
        <taxon>Salmonella</taxon>
    </lineage>
</organism>
<accession>B5RFJ0</accession>
<protein>
    <recommendedName>
        <fullName evidence="1">Phosphomethylpyrimidine synthase</fullName>
        <ecNumber evidence="1">4.1.99.17</ecNumber>
    </recommendedName>
    <alternativeName>
        <fullName evidence="1">Hydroxymethylpyrimidine phosphate synthase</fullName>
        <shortName evidence="1">HMP-P synthase</shortName>
        <shortName evidence="1">HMP-phosphate synthase</shortName>
        <shortName evidence="1">HMPP synthase</shortName>
    </alternativeName>
    <alternativeName>
        <fullName evidence="1">Thiamine biosynthesis protein ThiC</fullName>
    </alternativeName>
</protein>
<proteinExistence type="inferred from homology"/>
<sequence length="631" mass="70722">MSTTTLTRREQRAKAQHFIDTLEGTAFPNSKRIYVTGSQHDIRVPMREIQLSPTLIGGSKDNQQFEENEAVPVYDTSGPYGDPEVAINVQQGLAKLRQPWIDARNDSEELDDRSSAYTRERLADDGLDDLRFTGLLTPKRAKAGKRITQLHYARQGIVTPEMEFIAIRENMGRERICSEVLRHQHPGMSFGARLPENITPEFVRDEVAAGRAIIPANINHPESEPMIIGRNFPVKVNANIGNSAVTSSIEEEVEKLVWSTRWGADTVMDLSTGRYIHETREWILRNSPVPIGTVPIYQALEKVNGIAEDLTWEAFRDTLLEQAEQGVDYFTIHAGVLLRYVPMTAKRLTGIVSRGGSIMAKWCLSHHKENFLFEHFREICEICAAYDVSLSLGDGLRPGSIQDANDEAQFSELHTLGELTKIAWEYDVQVMIEGPGHVPMHMIQRNMTEELESCHEAPFYTLGPLTTDIAPGYDHFTSGIGAAMIGWFGCAMLCYVTPKEHLGLPNKEDVKQGLITYKIAAHAADLAKGHPGAQIRDNAMSKARFEFRWEDQFNLALDPFTARAYHDETLPQESGKVAHFCSMCGPKFCSMKISQEVRDYAAAQAIEVGMADMSESFRAKGGEIYLKREEA</sequence>